<comment type="function">
    <text evidence="1">Catalyzes the complicated ring closure reaction between the two acyclic compounds 1-deoxy-D-xylulose-5-phosphate (DXP) and 3-amino-2-oxopropyl phosphate (1-amino-acetone-3-phosphate or AAP) to form pyridoxine 5'-phosphate (PNP) and inorganic phosphate.</text>
</comment>
<comment type="catalytic activity">
    <reaction evidence="1">
        <text>3-amino-2-oxopropyl phosphate + 1-deoxy-D-xylulose 5-phosphate = pyridoxine 5'-phosphate + phosphate + 2 H2O + H(+)</text>
        <dbReference type="Rhea" id="RHEA:15265"/>
        <dbReference type="ChEBI" id="CHEBI:15377"/>
        <dbReference type="ChEBI" id="CHEBI:15378"/>
        <dbReference type="ChEBI" id="CHEBI:43474"/>
        <dbReference type="ChEBI" id="CHEBI:57279"/>
        <dbReference type="ChEBI" id="CHEBI:57792"/>
        <dbReference type="ChEBI" id="CHEBI:58589"/>
        <dbReference type="EC" id="2.6.99.2"/>
    </reaction>
</comment>
<comment type="pathway">
    <text evidence="1">Cofactor biosynthesis; pyridoxine 5'-phosphate biosynthesis; pyridoxine 5'-phosphate from D-erythrose 4-phosphate: step 5/5.</text>
</comment>
<comment type="subunit">
    <text evidence="1">Homooctamer; tetramer of dimers.</text>
</comment>
<comment type="subcellular location">
    <subcellularLocation>
        <location evidence="1">Cytoplasm</location>
    </subcellularLocation>
</comment>
<comment type="similarity">
    <text evidence="1">Belongs to the PNP synthase family.</text>
</comment>
<evidence type="ECO:0000255" key="1">
    <source>
        <dbReference type="HAMAP-Rule" id="MF_00279"/>
    </source>
</evidence>
<protein>
    <recommendedName>
        <fullName evidence="1">Pyridoxine 5'-phosphate synthase</fullName>
        <shortName evidence="1">PNP synthase</shortName>
        <ecNumber evidence="1">2.6.99.2</ecNumber>
    </recommendedName>
</protein>
<proteinExistence type="inferred from homology"/>
<feature type="chain" id="PRO_1000071930" description="Pyridoxine 5'-phosphate synthase">
    <location>
        <begin position="1"/>
        <end position="233"/>
    </location>
</feature>
<feature type="active site" description="Proton acceptor" evidence="1">
    <location>
        <position position="42"/>
    </location>
</feature>
<feature type="active site" description="Proton acceptor" evidence="1">
    <location>
        <position position="69"/>
    </location>
</feature>
<feature type="active site" description="Proton donor" evidence="1">
    <location>
        <position position="186"/>
    </location>
</feature>
<feature type="binding site" evidence="1">
    <location>
        <position position="6"/>
    </location>
    <ligand>
        <name>3-amino-2-oxopropyl phosphate</name>
        <dbReference type="ChEBI" id="CHEBI:57279"/>
    </ligand>
</feature>
<feature type="binding site" evidence="1">
    <location>
        <begin position="8"/>
        <end position="9"/>
    </location>
    <ligand>
        <name>1-deoxy-D-xylulose 5-phosphate</name>
        <dbReference type="ChEBI" id="CHEBI:57792"/>
    </ligand>
</feature>
<feature type="binding site" evidence="1">
    <location>
        <position position="17"/>
    </location>
    <ligand>
        <name>3-amino-2-oxopropyl phosphate</name>
        <dbReference type="ChEBI" id="CHEBI:57279"/>
    </ligand>
</feature>
<feature type="binding site" evidence="1">
    <location>
        <position position="44"/>
    </location>
    <ligand>
        <name>1-deoxy-D-xylulose 5-phosphate</name>
        <dbReference type="ChEBI" id="CHEBI:57792"/>
    </ligand>
</feature>
<feature type="binding site" evidence="1">
    <location>
        <position position="49"/>
    </location>
    <ligand>
        <name>1-deoxy-D-xylulose 5-phosphate</name>
        <dbReference type="ChEBI" id="CHEBI:57792"/>
    </ligand>
</feature>
<feature type="binding site" evidence="1">
    <location>
        <position position="99"/>
    </location>
    <ligand>
        <name>1-deoxy-D-xylulose 5-phosphate</name>
        <dbReference type="ChEBI" id="CHEBI:57792"/>
    </ligand>
</feature>
<feature type="binding site" evidence="1">
    <location>
        <position position="187"/>
    </location>
    <ligand>
        <name>3-amino-2-oxopropyl phosphate</name>
        <dbReference type="ChEBI" id="CHEBI:57279"/>
    </ligand>
</feature>
<feature type="binding site" evidence="1">
    <location>
        <begin position="208"/>
        <end position="209"/>
    </location>
    <ligand>
        <name>3-amino-2-oxopropyl phosphate</name>
        <dbReference type="ChEBI" id="CHEBI:57279"/>
    </ligand>
</feature>
<feature type="site" description="Transition state stabilizer" evidence="1">
    <location>
        <position position="150"/>
    </location>
</feature>
<accession>Q2GJT4</accession>
<keyword id="KW-0963">Cytoplasm</keyword>
<keyword id="KW-0664">Pyridoxine biosynthesis</keyword>
<keyword id="KW-0808">Transferase</keyword>
<dbReference type="EC" id="2.6.99.2" evidence="1"/>
<dbReference type="EMBL" id="CP000235">
    <property type="protein sequence ID" value="ABD43567.1"/>
    <property type="molecule type" value="Genomic_DNA"/>
</dbReference>
<dbReference type="RefSeq" id="WP_011450886.1">
    <property type="nucleotide sequence ID" value="NC_007797.1"/>
</dbReference>
<dbReference type="SMR" id="Q2GJT4"/>
<dbReference type="STRING" id="212042.APH_0790"/>
<dbReference type="PaxDb" id="212042-APH_0790"/>
<dbReference type="EnsemblBacteria" id="ABD43567">
    <property type="protein sequence ID" value="ABD43567"/>
    <property type="gene ID" value="APH_0790"/>
</dbReference>
<dbReference type="KEGG" id="aph:APH_0790"/>
<dbReference type="eggNOG" id="COG0854">
    <property type="taxonomic scope" value="Bacteria"/>
</dbReference>
<dbReference type="HOGENOM" id="CLU_074563_0_0_5"/>
<dbReference type="UniPathway" id="UPA00244">
    <property type="reaction ID" value="UER00313"/>
</dbReference>
<dbReference type="Proteomes" id="UP000001943">
    <property type="component" value="Chromosome"/>
</dbReference>
<dbReference type="GO" id="GO:0005829">
    <property type="term" value="C:cytosol"/>
    <property type="evidence" value="ECO:0007669"/>
    <property type="project" value="TreeGrafter"/>
</dbReference>
<dbReference type="GO" id="GO:0033856">
    <property type="term" value="F:pyridoxine 5'-phosphate synthase activity"/>
    <property type="evidence" value="ECO:0007669"/>
    <property type="project" value="UniProtKB-EC"/>
</dbReference>
<dbReference type="GO" id="GO:0008615">
    <property type="term" value="P:pyridoxine biosynthetic process"/>
    <property type="evidence" value="ECO:0007669"/>
    <property type="project" value="UniProtKB-UniRule"/>
</dbReference>
<dbReference type="CDD" id="cd00003">
    <property type="entry name" value="PNPsynthase"/>
    <property type="match status" value="1"/>
</dbReference>
<dbReference type="Gene3D" id="3.20.20.70">
    <property type="entry name" value="Aldolase class I"/>
    <property type="match status" value="1"/>
</dbReference>
<dbReference type="HAMAP" id="MF_00279">
    <property type="entry name" value="PdxJ"/>
    <property type="match status" value="1"/>
</dbReference>
<dbReference type="InterPro" id="IPR013785">
    <property type="entry name" value="Aldolase_TIM"/>
</dbReference>
<dbReference type="InterPro" id="IPR004569">
    <property type="entry name" value="PyrdxlP_synth_PdxJ"/>
</dbReference>
<dbReference type="InterPro" id="IPR036130">
    <property type="entry name" value="Pyridoxine-5'_phos_synth"/>
</dbReference>
<dbReference type="NCBIfam" id="TIGR00559">
    <property type="entry name" value="pdxJ"/>
    <property type="match status" value="1"/>
</dbReference>
<dbReference type="NCBIfam" id="NF003625">
    <property type="entry name" value="PRK05265.1-3"/>
    <property type="match status" value="1"/>
</dbReference>
<dbReference type="NCBIfam" id="NF003627">
    <property type="entry name" value="PRK05265.1-5"/>
    <property type="match status" value="1"/>
</dbReference>
<dbReference type="PANTHER" id="PTHR30456">
    <property type="entry name" value="PYRIDOXINE 5'-PHOSPHATE SYNTHASE"/>
    <property type="match status" value="1"/>
</dbReference>
<dbReference type="PANTHER" id="PTHR30456:SF0">
    <property type="entry name" value="PYRIDOXINE 5'-PHOSPHATE SYNTHASE"/>
    <property type="match status" value="1"/>
</dbReference>
<dbReference type="Pfam" id="PF03740">
    <property type="entry name" value="PdxJ"/>
    <property type="match status" value="1"/>
</dbReference>
<dbReference type="SUPFAM" id="SSF63892">
    <property type="entry name" value="Pyridoxine 5'-phosphate synthase"/>
    <property type="match status" value="1"/>
</dbReference>
<name>PDXJ_ANAPZ</name>
<sequence>MQLGVNVDHVATLRNLRGTTYPSIVELANIAVEHGADFITVHLREDRRHVRDDDLYALKKHVNVPINLEMAATEEMLAIAKELSPEFVCLVPEKREEVTTESGLDTKLLYDTRLFIISELQRHGIKVTLFLDPSEEDIACAKRMNVDKIELHVGAYCISRAPQELEMITRAAQLVHEAGMICHAGHGIDYECAAAISKVKHITAINVGHFLVCEAITQGMGNAVRKMKDIITS</sequence>
<reference key="1">
    <citation type="journal article" date="2006" name="PLoS Genet.">
        <title>Comparative genomics of emerging human ehrlichiosis agents.</title>
        <authorList>
            <person name="Dunning Hotopp J.C."/>
            <person name="Lin M."/>
            <person name="Madupu R."/>
            <person name="Crabtree J."/>
            <person name="Angiuoli S.V."/>
            <person name="Eisen J.A."/>
            <person name="Seshadri R."/>
            <person name="Ren Q."/>
            <person name="Wu M."/>
            <person name="Utterback T.R."/>
            <person name="Smith S."/>
            <person name="Lewis M."/>
            <person name="Khouri H."/>
            <person name="Zhang C."/>
            <person name="Niu H."/>
            <person name="Lin Q."/>
            <person name="Ohashi N."/>
            <person name="Zhi N."/>
            <person name="Nelson W.C."/>
            <person name="Brinkac L.M."/>
            <person name="Dodson R.J."/>
            <person name="Rosovitz M.J."/>
            <person name="Sundaram J.P."/>
            <person name="Daugherty S.C."/>
            <person name="Davidsen T."/>
            <person name="Durkin A.S."/>
            <person name="Gwinn M.L."/>
            <person name="Haft D.H."/>
            <person name="Selengut J.D."/>
            <person name="Sullivan S.A."/>
            <person name="Zafar N."/>
            <person name="Zhou L."/>
            <person name="Benahmed F."/>
            <person name="Forberger H."/>
            <person name="Halpin R."/>
            <person name="Mulligan S."/>
            <person name="Robinson J."/>
            <person name="White O."/>
            <person name="Rikihisa Y."/>
            <person name="Tettelin H."/>
        </authorList>
    </citation>
    <scope>NUCLEOTIDE SEQUENCE [LARGE SCALE GENOMIC DNA]</scope>
    <source>
        <strain>HZ</strain>
    </source>
</reference>
<organism>
    <name type="scientific">Anaplasma phagocytophilum (strain HZ)</name>
    <dbReference type="NCBI Taxonomy" id="212042"/>
    <lineage>
        <taxon>Bacteria</taxon>
        <taxon>Pseudomonadati</taxon>
        <taxon>Pseudomonadota</taxon>
        <taxon>Alphaproteobacteria</taxon>
        <taxon>Rickettsiales</taxon>
        <taxon>Anaplasmataceae</taxon>
        <taxon>Anaplasma</taxon>
        <taxon>phagocytophilum group</taxon>
    </lineage>
</organism>
<gene>
    <name evidence="1" type="primary">pdxJ</name>
    <name type="ordered locus">APH_0790</name>
</gene>